<sequence>MADVLERVTKIIVDRLGVEETEVVPAASFKEDLGADSLDVVELVMQLEDEFEMEISDEDAEKIATVGDAVTYIESHL</sequence>
<comment type="function">
    <text evidence="1">Carrier of the growing fatty acid chain in fatty acid biosynthesis.</text>
</comment>
<comment type="pathway">
    <text evidence="1">Lipid metabolism; fatty acid biosynthesis.</text>
</comment>
<comment type="subcellular location">
    <subcellularLocation>
        <location evidence="1">Cytoplasm</location>
    </subcellularLocation>
</comment>
<comment type="PTM">
    <text evidence="1">4'-phosphopantetheine is transferred from CoA to a specific serine of apo-ACP by AcpS. This modification is essential for activity because fatty acids are bound in thioester linkage to the sulfhydryl of the prosthetic group.</text>
</comment>
<comment type="similarity">
    <text evidence="1">Belongs to the acyl carrier protein (ACP) family.</text>
</comment>
<organism>
    <name type="scientific">Bacillus anthracis (strain A0248)</name>
    <dbReference type="NCBI Taxonomy" id="592021"/>
    <lineage>
        <taxon>Bacteria</taxon>
        <taxon>Bacillati</taxon>
        <taxon>Bacillota</taxon>
        <taxon>Bacilli</taxon>
        <taxon>Bacillales</taxon>
        <taxon>Bacillaceae</taxon>
        <taxon>Bacillus</taxon>
        <taxon>Bacillus cereus group</taxon>
    </lineage>
</organism>
<gene>
    <name evidence="1" type="primary">acpP</name>
    <name type="ordered locus">BAA_4012</name>
</gene>
<protein>
    <recommendedName>
        <fullName evidence="1">Acyl carrier protein</fullName>
        <shortName evidence="1">ACP</shortName>
    </recommendedName>
</protein>
<dbReference type="EMBL" id="CP001598">
    <property type="protein sequence ID" value="ACQ46610.1"/>
    <property type="molecule type" value="Genomic_DNA"/>
</dbReference>
<dbReference type="RefSeq" id="WP_000786062.1">
    <property type="nucleotide sequence ID" value="NC_012659.1"/>
</dbReference>
<dbReference type="SMR" id="C3P5Q1"/>
<dbReference type="GeneID" id="93007262"/>
<dbReference type="KEGG" id="bai:BAA_4012"/>
<dbReference type="HOGENOM" id="CLU_108696_5_3_9"/>
<dbReference type="UniPathway" id="UPA00094"/>
<dbReference type="GO" id="GO:0005829">
    <property type="term" value="C:cytosol"/>
    <property type="evidence" value="ECO:0007669"/>
    <property type="project" value="TreeGrafter"/>
</dbReference>
<dbReference type="GO" id="GO:0016020">
    <property type="term" value="C:membrane"/>
    <property type="evidence" value="ECO:0007669"/>
    <property type="project" value="GOC"/>
</dbReference>
<dbReference type="GO" id="GO:0000035">
    <property type="term" value="F:acyl binding"/>
    <property type="evidence" value="ECO:0007669"/>
    <property type="project" value="TreeGrafter"/>
</dbReference>
<dbReference type="GO" id="GO:0000036">
    <property type="term" value="F:acyl carrier activity"/>
    <property type="evidence" value="ECO:0007669"/>
    <property type="project" value="UniProtKB-UniRule"/>
</dbReference>
<dbReference type="GO" id="GO:0009245">
    <property type="term" value="P:lipid A biosynthetic process"/>
    <property type="evidence" value="ECO:0007669"/>
    <property type="project" value="TreeGrafter"/>
</dbReference>
<dbReference type="FunFam" id="1.10.1200.10:FF:000001">
    <property type="entry name" value="Acyl carrier protein"/>
    <property type="match status" value="1"/>
</dbReference>
<dbReference type="Gene3D" id="1.10.1200.10">
    <property type="entry name" value="ACP-like"/>
    <property type="match status" value="1"/>
</dbReference>
<dbReference type="HAMAP" id="MF_01217">
    <property type="entry name" value="Acyl_carrier"/>
    <property type="match status" value="1"/>
</dbReference>
<dbReference type="InterPro" id="IPR003231">
    <property type="entry name" value="ACP"/>
</dbReference>
<dbReference type="InterPro" id="IPR036736">
    <property type="entry name" value="ACP-like_sf"/>
</dbReference>
<dbReference type="InterPro" id="IPR009081">
    <property type="entry name" value="PP-bd_ACP"/>
</dbReference>
<dbReference type="InterPro" id="IPR006162">
    <property type="entry name" value="Ppantetheine_attach_site"/>
</dbReference>
<dbReference type="NCBIfam" id="TIGR00517">
    <property type="entry name" value="acyl_carrier"/>
    <property type="match status" value="1"/>
</dbReference>
<dbReference type="NCBIfam" id="NF002148">
    <property type="entry name" value="PRK00982.1-2"/>
    <property type="match status" value="1"/>
</dbReference>
<dbReference type="NCBIfam" id="NF002149">
    <property type="entry name" value="PRK00982.1-3"/>
    <property type="match status" value="1"/>
</dbReference>
<dbReference type="NCBIfam" id="NF002150">
    <property type="entry name" value="PRK00982.1-4"/>
    <property type="match status" value="1"/>
</dbReference>
<dbReference type="NCBIfam" id="NF002151">
    <property type="entry name" value="PRK00982.1-5"/>
    <property type="match status" value="1"/>
</dbReference>
<dbReference type="PANTHER" id="PTHR20863">
    <property type="entry name" value="ACYL CARRIER PROTEIN"/>
    <property type="match status" value="1"/>
</dbReference>
<dbReference type="PANTHER" id="PTHR20863:SF76">
    <property type="entry name" value="CARRIER DOMAIN-CONTAINING PROTEIN"/>
    <property type="match status" value="1"/>
</dbReference>
<dbReference type="Pfam" id="PF00550">
    <property type="entry name" value="PP-binding"/>
    <property type="match status" value="1"/>
</dbReference>
<dbReference type="SUPFAM" id="SSF47336">
    <property type="entry name" value="ACP-like"/>
    <property type="match status" value="1"/>
</dbReference>
<dbReference type="PROSITE" id="PS50075">
    <property type="entry name" value="CARRIER"/>
    <property type="match status" value="1"/>
</dbReference>
<dbReference type="PROSITE" id="PS00012">
    <property type="entry name" value="PHOSPHOPANTETHEINE"/>
    <property type="match status" value="1"/>
</dbReference>
<accession>C3P5Q1</accession>
<reference key="1">
    <citation type="submission" date="2009-04" db="EMBL/GenBank/DDBJ databases">
        <title>Genome sequence of Bacillus anthracis A0248.</title>
        <authorList>
            <person name="Dodson R.J."/>
            <person name="Munk A.C."/>
            <person name="Bruce D."/>
            <person name="Detter C."/>
            <person name="Tapia R."/>
            <person name="Sutton G."/>
            <person name="Sims D."/>
            <person name="Brettin T."/>
        </authorList>
    </citation>
    <scope>NUCLEOTIDE SEQUENCE [LARGE SCALE GENOMIC DNA]</scope>
    <source>
        <strain>A0248</strain>
    </source>
</reference>
<name>ACP_BACAA</name>
<feature type="chain" id="PRO_1000164768" description="Acyl carrier protein">
    <location>
        <begin position="1"/>
        <end position="77"/>
    </location>
</feature>
<feature type="domain" description="Carrier" evidence="2">
    <location>
        <begin position="2"/>
        <end position="77"/>
    </location>
</feature>
<feature type="modified residue" description="O-(pantetheine 4'-phosphoryl)serine" evidence="2">
    <location>
        <position position="37"/>
    </location>
</feature>
<proteinExistence type="inferred from homology"/>
<evidence type="ECO:0000255" key="1">
    <source>
        <dbReference type="HAMAP-Rule" id="MF_01217"/>
    </source>
</evidence>
<evidence type="ECO:0000255" key="2">
    <source>
        <dbReference type="PROSITE-ProRule" id="PRU00258"/>
    </source>
</evidence>
<keyword id="KW-0963">Cytoplasm</keyword>
<keyword id="KW-0275">Fatty acid biosynthesis</keyword>
<keyword id="KW-0276">Fatty acid metabolism</keyword>
<keyword id="KW-0444">Lipid biosynthesis</keyword>
<keyword id="KW-0443">Lipid metabolism</keyword>
<keyword id="KW-0596">Phosphopantetheine</keyword>
<keyword id="KW-0597">Phosphoprotein</keyword>